<protein>
    <recommendedName>
        <fullName evidence="1">CDP-archaeol synthase</fullName>
        <ecNumber evidence="1">2.7.7.67</ecNumber>
    </recommendedName>
    <alternativeName>
        <fullName evidence="1">CDP-2,3-bis-(O-geranylgeranyl)-sn-glycerol synthase</fullName>
    </alternativeName>
</protein>
<gene>
    <name evidence="1" type="primary">carS</name>
    <name type="ordered locus">Mboo_0842</name>
</gene>
<reference key="1">
    <citation type="journal article" date="2015" name="Microbiology">
        <title>Genome of Methanoregula boonei 6A8 reveals adaptations to oligotrophic peatland environments.</title>
        <authorList>
            <person name="Braeuer S."/>
            <person name="Cadillo-Quiroz H."/>
            <person name="Kyrpides N."/>
            <person name="Woyke T."/>
            <person name="Goodwin L."/>
            <person name="Detter C."/>
            <person name="Podell S."/>
            <person name="Yavitt J.B."/>
            <person name="Zinder S.H."/>
        </authorList>
    </citation>
    <scope>NUCLEOTIDE SEQUENCE [LARGE SCALE GENOMIC DNA]</scope>
    <source>
        <strain>DSM 21154 / JCM 14090 / 6A8</strain>
    </source>
</reference>
<organism>
    <name type="scientific">Methanoregula boonei (strain DSM 21154 / JCM 14090 / 6A8)</name>
    <dbReference type="NCBI Taxonomy" id="456442"/>
    <lineage>
        <taxon>Archaea</taxon>
        <taxon>Methanobacteriati</taxon>
        <taxon>Methanobacteriota</taxon>
        <taxon>Stenosarchaea group</taxon>
        <taxon>Methanomicrobia</taxon>
        <taxon>Methanomicrobiales</taxon>
        <taxon>Methanoregulaceae</taxon>
        <taxon>Methanoregula</taxon>
    </lineage>
</organism>
<evidence type="ECO:0000255" key="1">
    <source>
        <dbReference type="HAMAP-Rule" id="MF_01117"/>
    </source>
</evidence>
<proteinExistence type="inferred from homology"/>
<comment type="function">
    <text evidence="1">Catalyzes the formation of CDP-2,3-bis-(O-geranylgeranyl)-sn-glycerol (CDP-archaeol) from 2,3-bis-(O-geranylgeranyl)-sn-glycerol 1-phosphate (DGGGP) and CTP. This reaction is the third ether-bond-formation step in the biosynthesis of archaeal membrane lipids.</text>
</comment>
<comment type="catalytic activity">
    <reaction evidence="1">
        <text>2,3-bis-O-(geranylgeranyl)-sn-glycerol 1-phosphate + CTP + H(+) = CDP-2,3-bis-O-(geranylgeranyl)-sn-glycerol + diphosphate</text>
        <dbReference type="Rhea" id="RHEA:25690"/>
        <dbReference type="ChEBI" id="CHEBI:15378"/>
        <dbReference type="ChEBI" id="CHEBI:33019"/>
        <dbReference type="ChEBI" id="CHEBI:37563"/>
        <dbReference type="ChEBI" id="CHEBI:58837"/>
        <dbReference type="ChEBI" id="CHEBI:58838"/>
        <dbReference type="EC" id="2.7.7.67"/>
    </reaction>
</comment>
<comment type="cofactor">
    <cofactor evidence="1">
        <name>Mg(2+)</name>
        <dbReference type="ChEBI" id="CHEBI:18420"/>
    </cofactor>
</comment>
<comment type="pathway">
    <text evidence="1">Membrane lipid metabolism; glycerophospholipid metabolism.</text>
</comment>
<comment type="subcellular location">
    <subcellularLocation>
        <location evidence="1">Cell membrane</location>
        <topology evidence="1">Multi-pass membrane protein</topology>
    </subcellularLocation>
</comment>
<comment type="similarity">
    <text evidence="1">Belongs to the CDP-archaeol synthase family.</text>
</comment>
<keyword id="KW-1003">Cell membrane</keyword>
<keyword id="KW-0444">Lipid biosynthesis</keyword>
<keyword id="KW-0443">Lipid metabolism</keyword>
<keyword id="KW-0460">Magnesium</keyword>
<keyword id="KW-0472">Membrane</keyword>
<keyword id="KW-0594">Phospholipid biosynthesis</keyword>
<keyword id="KW-1208">Phospholipid metabolism</keyword>
<keyword id="KW-1185">Reference proteome</keyword>
<keyword id="KW-0808">Transferase</keyword>
<keyword id="KW-0812">Transmembrane</keyword>
<keyword id="KW-1133">Transmembrane helix</keyword>
<accession>A7I6J9</accession>
<name>CDPAS_METB6</name>
<feature type="chain" id="PRO_1000065244" description="CDP-archaeol synthase">
    <location>
        <begin position="1"/>
        <end position="165"/>
    </location>
</feature>
<feature type="transmembrane region" description="Helical" evidence="1">
    <location>
        <begin position="41"/>
        <end position="61"/>
    </location>
</feature>
<feature type="transmembrane region" description="Helical" evidence="1">
    <location>
        <begin position="72"/>
        <end position="92"/>
    </location>
</feature>
<feature type="transmembrane region" description="Helical" evidence="1">
    <location>
        <begin position="103"/>
        <end position="123"/>
    </location>
</feature>
<feature type="transmembrane region" description="Helical" evidence="1">
    <location>
        <begin position="127"/>
        <end position="147"/>
    </location>
</feature>
<dbReference type="EC" id="2.7.7.67" evidence="1"/>
<dbReference type="EMBL" id="CP000780">
    <property type="protein sequence ID" value="ABS55360.1"/>
    <property type="molecule type" value="Genomic_DNA"/>
</dbReference>
<dbReference type="SMR" id="A7I6J9"/>
<dbReference type="STRING" id="456442.Mboo_0842"/>
<dbReference type="KEGG" id="mbn:Mboo_0842"/>
<dbReference type="eggNOG" id="arCOG04106">
    <property type="taxonomic scope" value="Archaea"/>
</dbReference>
<dbReference type="HOGENOM" id="CLU_105710_0_0_2"/>
<dbReference type="UniPathway" id="UPA00940"/>
<dbReference type="Proteomes" id="UP000002408">
    <property type="component" value="Chromosome"/>
</dbReference>
<dbReference type="GO" id="GO:0005886">
    <property type="term" value="C:plasma membrane"/>
    <property type="evidence" value="ECO:0007669"/>
    <property type="project" value="UniProtKB-SubCell"/>
</dbReference>
<dbReference type="GO" id="GO:0043338">
    <property type="term" value="F:CDP-2,3-bis-(O-geranylgeranyl)-sn-glycerol synthase activity"/>
    <property type="evidence" value="ECO:0007669"/>
    <property type="project" value="UniProtKB-EC"/>
</dbReference>
<dbReference type="GO" id="GO:0046474">
    <property type="term" value="P:glycerophospholipid biosynthetic process"/>
    <property type="evidence" value="ECO:0007669"/>
    <property type="project" value="UniProtKB-UniRule"/>
</dbReference>
<dbReference type="HAMAP" id="MF_01117">
    <property type="entry name" value="CDP_archaeol_synth"/>
    <property type="match status" value="1"/>
</dbReference>
<dbReference type="InterPro" id="IPR032690">
    <property type="entry name" value="CarS"/>
</dbReference>
<dbReference type="InterPro" id="IPR002726">
    <property type="entry name" value="CarS_archaea"/>
</dbReference>
<dbReference type="NCBIfam" id="NF003114">
    <property type="entry name" value="PRK04032.1"/>
    <property type="match status" value="1"/>
</dbReference>
<dbReference type="PANTHER" id="PTHR39650">
    <property type="entry name" value="CDP-ARCHAEOL SYNTHASE"/>
    <property type="match status" value="1"/>
</dbReference>
<dbReference type="PANTHER" id="PTHR39650:SF1">
    <property type="entry name" value="CDP-ARCHAEOL SYNTHASE"/>
    <property type="match status" value="1"/>
</dbReference>
<dbReference type="Pfam" id="PF01864">
    <property type="entry name" value="CarS-like"/>
    <property type="match status" value="1"/>
</dbReference>
<sequence length="165" mass="18188">MVPAYIPNPVAALCGGGTPIDFCRNYTDGRRILGNGKTYRGLICGVLAGVLIGLVQIWLVGTYHWDLPRQTILSVTLLALGALLGDMGKSFIKRRLGKERGEAWPVADQYDLVVGAFLLTIIFDPAWFFAVVTLPVLIAILVITPVLHRSVNILGYWIKVKKEPW</sequence>